<sequence length="231" mass="26224">MSAQKLYASHVPLAPLSRMLLGIGSAVTAISDPKRGDMVAAMGETTAIGPVLENIRKRMESDVVGKRLLLEKPRISNGTIDRKWLRQLPDGTLGKLYSNFLDRLNTSPDARPTVKYIDNLEHLYVMQRYRETHDFTHIALEQKTNMLGEVTVKYFEGIQYGLPMCVTGGIFGGARLLTKNRQELVDRNLPWVVEQATNARFFMAFDWENHFEKQLSEVQKELNITPLSVNM</sequence>
<evidence type="ECO:0000255" key="1">
    <source>
        <dbReference type="HAMAP-Rule" id="MF_03111"/>
    </source>
</evidence>
<evidence type="ECO:0000269" key="2">
    <source>
    </source>
</evidence>
<keyword id="KW-0456">Lyase</keyword>
<keyword id="KW-0472">Membrane</keyword>
<keyword id="KW-0479">Metal-binding</keyword>
<keyword id="KW-0496">Mitochondrion</keyword>
<keyword id="KW-0999">Mitochondrion inner membrane</keyword>
<keyword id="KW-1185">Reference proteome</keyword>
<keyword id="KW-0831">Ubiquinone biosynthesis</keyword>
<keyword id="KW-0862">Zinc</keyword>
<feature type="chain" id="PRO_0000115241" description="Ubiquinone biosynthesis protein coq-4, mitochondrial">
    <location>
        <begin position="1"/>
        <end position="231"/>
    </location>
</feature>
<feature type="binding site" evidence="1">
    <location>
        <position position="133"/>
    </location>
    <ligand>
        <name>Zn(2+)</name>
        <dbReference type="ChEBI" id="CHEBI:29105"/>
    </ligand>
</feature>
<feature type="binding site" evidence="1">
    <location>
        <position position="134"/>
    </location>
    <ligand>
        <name>Zn(2+)</name>
        <dbReference type="ChEBI" id="CHEBI:29105"/>
    </ligand>
</feature>
<feature type="binding site" evidence="1">
    <location>
        <position position="137"/>
    </location>
    <ligand>
        <name>Zn(2+)</name>
        <dbReference type="ChEBI" id="CHEBI:29105"/>
    </ligand>
</feature>
<feature type="binding site" evidence="1">
    <location>
        <position position="149"/>
    </location>
    <ligand>
        <name>Zn(2+)</name>
        <dbReference type="ChEBI" id="CHEBI:29105"/>
    </ligand>
</feature>
<organism>
    <name type="scientific">Caenorhabditis elegans</name>
    <dbReference type="NCBI Taxonomy" id="6239"/>
    <lineage>
        <taxon>Eukaryota</taxon>
        <taxon>Metazoa</taxon>
        <taxon>Ecdysozoa</taxon>
        <taxon>Nematoda</taxon>
        <taxon>Chromadorea</taxon>
        <taxon>Rhabditida</taxon>
        <taxon>Rhabditina</taxon>
        <taxon>Rhabditomorpha</taxon>
        <taxon>Rhabditoidea</taxon>
        <taxon>Rhabditidae</taxon>
        <taxon>Peloderinae</taxon>
        <taxon>Caenorhabditis</taxon>
    </lineage>
</organism>
<comment type="function">
    <text evidence="1">Lyase that catalyzes the C1-decarboxylation of 4-hydroxy-3-methoxy-5-(all-trans-polyprenyl)benzoic acid into 2-methoxy-6-(all-trans-polyprenyl)phenol during ubiquinone biosynthesis.</text>
</comment>
<comment type="catalytic activity">
    <reaction evidence="1">
        <text>a 4-hydroxy-3-methoxy-5-(all-trans-polyprenyl)benzoate + H(+) = a 2-methoxy-6-(all-trans-polyprenyl)phenol + CO2</text>
        <dbReference type="Rhea" id="RHEA:81179"/>
        <dbReference type="Rhea" id="RHEA-COMP:9551"/>
        <dbReference type="Rhea" id="RHEA-COMP:10931"/>
        <dbReference type="ChEBI" id="CHEBI:15378"/>
        <dbReference type="ChEBI" id="CHEBI:16526"/>
        <dbReference type="ChEBI" id="CHEBI:62731"/>
        <dbReference type="ChEBI" id="CHEBI:84443"/>
        <dbReference type="EC" id="4.1.1.130"/>
    </reaction>
</comment>
<comment type="cofactor">
    <cofactor evidence="1">
        <name>Zn(2+)</name>
        <dbReference type="ChEBI" id="CHEBI:29105"/>
    </cofactor>
</comment>
<comment type="pathway">
    <text evidence="1">Cofactor biosynthesis; ubiquinone biosynthesis.</text>
</comment>
<comment type="subunit">
    <text evidence="1">Component of a multi-subunit COQ enzyme complex.</text>
</comment>
<comment type="subcellular location">
    <subcellularLocation>
        <location evidence="1">Mitochondrion inner membrane</location>
        <topology evidence="1">Peripheral membrane protein</topology>
        <orientation evidence="1">Matrix side</orientation>
    </subcellularLocation>
</comment>
<comment type="disruption phenotype">
    <text evidence="2">Extends the life span.</text>
</comment>
<comment type="miscellaneous">
    <text evidence="1">This protein may be expected to contain an N-terminal transit peptide but none has been predicted.</text>
</comment>
<comment type="similarity">
    <text evidence="1">Belongs to the COQ4 family.</text>
</comment>
<gene>
    <name evidence="1" type="primary">coq-4</name>
    <name type="ORF">T03F1.2</name>
</gene>
<proteinExistence type="inferred from homology"/>
<name>COQ4_CAEEL</name>
<accession>P91428</accession>
<protein>
    <recommendedName>
        <fullName evidence="1">Ubiquinone biosynthesis protein coq-4, mitochondrial</fullName>
    </recommendedName>
    <alternativeName>
        <fullName>4-hydroxy-3-methoxy-5-polyprenylbenzoate decarboxylase</fullName>
        <ecNumber evidence="1">4.1.1.130</ecNumber>
    </alternativeName>
    <alternativeName>
        <fullName evidence="1">Coenzyme Q biosynthesis protein 4</fullName>
    </alternativeName>
</protein>
<reference key="1">
    <citation type="journal article" date="1998" name="Science">
        <title>Genome sequence of the nematode C. elegans: a platform for investigating biology.</title>
        <authorList>
            <consortium name="The C. elegans sequencing consortium"/>
        </authorList>
    </citation>
    <scope>NUCLEOTIDE SEQUENCE [LARGE SCALE GENOMIC DNA]</scope>
    <source>
        <strain>Bristol N2</strain>
    </source>
</reference>
<reference key="2">
    <citation type="journal article" date="2003" name="FASEB J.">
        <title>Silencing of ubiquinone biosynthesis genes extends life span in Caenorhabditis elegans.</title>
        <authorList>
            <person name="Asencio C."/>
            <person name="Rodriguez-Aguilera J.C."/>
            <person name="Ruiz-Ferrer M."/>
            <person name="Vela J."/>
            <person name="Navas P."/>
        </authorList>
    </citation>
    <scope>DISRUPTION PHENOTYPE</scope>
</reference>
<dbReference type="EC" id="4.1.1.130" evidence="1"/>
<dbReference type="EMBL" id="FO080917">
    <property type="protein sequence ID" value="CCD67787.1"/>
    <property type="molecule type" value="Genomic_DNA"/>
</dbReference>
<dbReference type="PIR" id="T29199">
    <property type="entry name" value="T29199"/>
</dbReference>
<dbReference type="RefSeq" id="NP_491246.4">
    <property type="nucleotide sequence ID" value="NM_058845.4"/>
</dbReference>
<dbReference type="SMR" id="P91428"/>
<dbReference type="BioGRID" id="37440">
    <property type="interactions" value="1"/>
</dbReference>
<dbReference type="FunCoup" id="P91428">
    <property type="interactions" value="1498"/>
</dbReference>
<dbReference type="STRING" id="6239.T03F1.2.1"/>
<dbReference type="PaxDb" id="6239-T03F1.2"/>
<dbReference type="PeptideAtlas" id="P91428"/>
<dbReference type="EnsemblMetazoa" id="T03F1.2.1">
    <property type="protein sequence ID" value="T03F1.2.1"/>
    <property type="gene ID" value="WBGene00000764"/>
</dbReference>
<dbReference type="GeneID" id="171966"/>
<dbReference type="KEGG" id="cel:CELE_T03F1.2"/>
<dbReference type="UCSC" id="T03F1.2">
    <property type="organism name" value="c. elegans"/>
</dbReference>
<dbReference type="AGR" id="WB:WBGene00000764"/>
<dbReference type="CTD" id="171966"/>
<dbReference type="WormBase" id="T03F1.2">
    <property type="protein sequence ID" value="CE40117"/>
    <property type="gene ID" value="WBGene00000764"/>
    <property type="gene designation" value="coq-4"/>
</dbReference>
<dbReference type="eggNOG" id="KOG3244">
    <property type="taxonomic scope" value="Eukaryota"/>
</dbReference>
<dbReference type="GeneTree" id="ENSGT00390000003828"/>
<dbReference type="HOGENOM" id="CLU_061241_1_1_1"/>
<dbReference type="InParanoid" id="P91428"/>
<dbReference type="OMA" id="YYERHFH"/>
<dbReference type="OrthoDB" id="4249at2759"/>
<dbReference type="PhylomeDB" id="P91428"/>
<dbReference type="Reactome" id="R-CEL-2142789">
    <property type="pathway name" value="Ubiquinol biosynthesis"/>
</dbReference>
<dbReference type="UniPathway" id="UPA00232"/>
<dbReference type="PRO" id="PR:P91428"/>
<dbReference type="Proteomes" id="UP000001940">
    <property type="component" value="Chromosome I"/>
</dbReference>
<dbReference type="Bgee" id="WBGene00000764">
    <property type="expression patterns" value="Expressed in germ line (C elegans) and 4 other cell types or tissues"/>
</dbReference>
<dbReference type="GO" id="GO:0031314">
    <property type="term" value="C:extrinsic component of mitochondrial inner membrane"/>
    <property type="evidence" value="ECO:0000250"/>
    <property type="project" value="WormBase"/>
</dbReference>
<dbReference type="GO" id="GO:0005739">
    <property type="term" value="C:mitochondrion"/>
    <property type="evidence" value="ECO:0000318"/>
    <property type="project" value="GO_Central"/>
</dbReference>
<dbReference type="GO" id="GO:0006744">
    <property type="term" value="P:ubiquinone biosynthetic process"/>
    <property type="evidence" value="ECO:0000315"/>
    <property type="project" value="WormBase"/>
</dbReference>
<dbReference type="HAMAP" id="MF_03111">
    <property type="entry name" value="Coq4"/>
    <property type="match status" value="1"/>
</dbReference>
<dbReference type="InterPro" id="IPR007715">
    <property type="entry name" value="Coq4"/>
</dbReference>
<dbReference type="InterPro" id="IPR027540">
    <property type="entry name" value="Coq4_euk"/>
</dbReference>
<dbReference type="PANTHER" id="PTHR12922">
    <property type="entry name" value="UBIQUINONE BIOSYNTHESIS PROTEIN"/>
    <property type="match status" value="1"/>
</dbReference>
<dbReference type="PANTHER" id="PTHR12922:SF7">
    <property type="entry name" value="UBIQUINONE BIOSYNTHESIS PROTEIN COQ4 HOMOLOG, MITOCHONDRIAL"/>
    <property type="match status" value="1"/>
</dbReference>
<dbReference type="Pfam" id="PF05019">
    <property type="entry name" value="Coq4"/>
    <property type="match status" value="1"/>
</dbReference>